<name>OAT_CAEEL</name>
<proteinExistence type="inferred from homology"/>
<sequence length="422" mass="46454">MLSSLRRVVPSLPRGSRSLTSQQIFDREKKFGCHNYKPLPVALSKGEGCFVWDVEGKKYFDFLAAYSAVNQGHCHPKLLKVVQEQASTLTLTSRAFYNNVLGEYEEYVTKLFKYDKVLPMNTGVEACESAVKLARRWAYDVKGVKDNEAVVVFAENNFWGRSIAAISASTDPDSFARFGPFVPGFKTVPYNNLKAVEDAIKDKNVAAFMVEPIQGEAGVVLPDPGYLKGVSDLCKKYNVLFITDEVQSGLGRSGKLLAHYHDNVRPDIVVLGKALSGGFYPVSAVLCDDNVMMNIKPGEHGSTYGGNPLACKVAIAALEILQEEKLVENSAVMGDLLMSKLKTLPKDIVSTVRGKGLFCAIVINKKYDAWKVCLKLKENGLLAKNTHGDIIRFAPPLCINKEQVEQAADIIIKTVTDFAKQN</sequence>
<reference key="1">
    <citation type="journal article" date="1998" name="Science">
        <title>Genome sequence of the nematode C. elegans: a platform for investigating biology.</title>
        <authorList>
            <consortium name="The C. elegans sequencing consortium"/>
        </authorList>
    </citation>
    <scope>NUCLEOTIDE SEQUENCE [LARGE SCALE GENOMIC DNA]</scope>
    <source>
        <strain>Bristol N2</strain>
    </source>
</reference>
<accession>Q18040</accession>
<protein>
    <recommendedName>
        <fullName>Probable ornithine aminotransferase, mitochondrial</fullName>
        <ecNumber evidence="2">2.6.1.13</ecNumber>
    </recommendedName>
    <alternativeName>
        <fullName>Ornithine--oxo-acid aminotransferase</fullName>
    </alternativeName>
</protein>
<dbReference type="EC" id="2.6.1.13" evidence="2"/>
<dbReference type="EMBL" id="FO080367">
    <property type="protein sequence ID" value="CCD63230.1"/>
    <property type="molecule type" value="Genomic_DNA"/>
</dbReference>
<dbReference type="PIR" id="G88481">
    <property type="entry name" value="G88481"/>
</dbReference>
<dbReference type="RefSeq" id="NP_741194.1">
    <property type="nucleotide sequence ID" value="NM_171877.6"/>
</dbReference>
<dbReference type="SMR" id="Q18040"/>
<dbReference type="BioGRID" id="41126">
    <property type="interactions" value="6"/>
</dbReference>
<dbReference type="FunCoup" id="Q18040">
    <property type="interactions" value="2030"/>
</dbReference>
<dbReference type="IntAct" id="Q18040">
    <property type="interactions" value="1"/>
</dbReference>
<dbReference type="STRING" id="6239.C16A3.10.2"/>
<dbReference type="PaxDb" id="6239-C16A3.10a.1"/>
<dbReference type="PeptideAtlas" id="Q18040"/>
<dbReference type="EnsemblMetazoa" id="C16A3.10.1">
    <property type="protein sequence ID" value="C16A3.10.1"/>
    <property type="gene ID" value="WBGene00015814"/>
</dbReference>
<dbReference type="EnsemblMetazoa" id="C16A3.10.2">
    <property type="protein sequence ID" value="C16A3.10.2"/>
    <property type="gene ID" value="WBGene00015814"/>
</dbReference>
<dbReference type="GeneID" id="175908"/>
<dbReference type="KEGG" id="cel:CELE_C16A3.10"/>
<dbReference type="UCSC" id="C16A3.10c.2">
    <property type="organism name" value="c. elegans"/>
</dbReference>
<dbReference type="AGR" id="WB:WBGene00015814"/>
<dbReference type="CTD" id="175908"/>
<dbReference type="WormBase" id="C16A3.10">
    <property type="protein sequence ID" value="CE04010"/>
    <property type="gene ID" value="WBGene00015814"/>
    <property type="gene designation" value="oatr-1"/>
</dbReference>
<dbReference type="eggNOG" id="KOG1402">
    <property type="taxonomic scope" value="Eukaryota"/>
</dbReference>
<dbReference type="GeneTree" id="ENSGT00630000089895"/>
<dbReference type="HOGENOM" id="CLU_016922_10_3_1"/>
<dbReference type="InParanoid" id="Q18040"/>
<dbReference type="OMA" id="RSAWDLC"/>
<dbReference type="OrthoDB" id="425114at2759"/>
<dbReference type="PhylomeDB" id="Q18040"/>
<dbReference type="Reactome" id="R-CEL-8964539">
    <property type="pathway name" value="Glutamate and glutamine metabolism"/>
</dbReference>
<dbReference type="UniPathway" id="UPA00098">
    <property type="reaction ID" value="UER00358"/>
</dbReference>
<dbReference type="PRO" id="PR:Q18040"/>
<dbReference type="Proteomes" id="UP000001940">
    <property type="component" value="Chromosome III"/>
</dbReference>
<dbReference type="Bgee" id="WBGene00015814">
    <property type="expression patterns" value="Expressed in adult organism and 4 other cell types or tissues"/>
</dbReference>
<dbReference type="GO" id="GO:0005737">
    <property type="term" value="C:cytoplasm"/>
    <property type="evidence" value="ECO:0000318"/>
    <property type="project" value="GO_Central"/>
</dbReference>
<dbReference type="GO" id="GO:0005759">
    <property type="term" value="C:mitochondrial matrix"/>
    <property type="evidence" value="ECO:0007669"/>
    <property type="project" value="UniProtKB-SubCell"/>
</dbReference>
<dbReference type="GO" id="GO:0042802">
    <property type="term" value="F:identical protein binding"/>
    <property type="evidence" value="ECO:0000318"/>
    <property type="project" value="GO_Central"/>
</dbReference>
<dbReference type="GO" id="GO:0004587">
    <property type="term" value="F:ornithine aminotransferase activity"/>
    <property type="evidence" value="ECO:0000318"/>
    <property type="project" value="GO_Central"/>
</dbReference>
<dbReference type="GO" id="GO:0030170">
    <property type="term" value="F:pyridoxal phosphate binding"/>
    <property type="evidence" value="ECO:0000318"/>
    <property type="project" value="GO_Central"/>
</dbReference>
<dbReference type="GO" id="GO:0019544">
    <property type="term" value="P:arginine catabolic process to glutamate"/>
    <property type="evidence" value="ECO:0000318"/>
    <property type="project" value="GO_Central"/>
</dbReference>
<dbReference type="GO" id="GO:0010121">
    <property type="term" value="P:arginine catabolic process to proline via ornithine"/>
    <property type="evidence" value="ECO:0000318"/>
    <property type="project" value="GO_Central"/>
</dbReference>
<dbReference type="GO" id="GO:0055129">
    <property type="term" value="P:L-proline biosynthetic process"/>
    <property type="evidence" value="ECO:0007669"/>
    <property type="project" value="UniProtKB-UniPathway"/>
</dbReference>
<dbReference type="CDD" id="cd00610">
    <property type="entry name" value="OAT_like"/>
    <property type="match status" value="1"/>
</dbReference>
<dbReference type="FunFam" id="3.40.640.10:FF:000011">
    <property type="entry name" value="Ornithine aminotransferase"/>
    <property type="match status" value="1"/>
</dbReference>
<dbReference type="FunFam" id="3.90.1150.10:FF:000152">
    <property type="entry name" value="Ornithine aminotransferase"/>
    <property type="match status" value="1"/>
</dbReference>
<dbReference type="Gene3D" id="3.90.1150.10">
    <property type="entry name" value="Aspartate Aminotransferase, domain 1"/>
    <property type="match status" value="1"/>
</dbReference>
<dbReference type="Gene3D" id="3.40.640.10">
    <property type="entry name" value="Type I PLP-dependent aspartate aminotransferase-like (Major domain)"/>
    <property type="match status" value="1"/>
</dbReference>
<dbReference type="InterPro" id="IPR005814">
    <property type="entry name" value="Aminotrans_3"/>
</dbReference>
<dbReference type="InterPro" id="IPR049704">
    <property type="entry name" value="Aminotrans_3_PPA_site"/>
</dbReference>
<dbReference type="InterPro" id="IPR050103">
    <property type="entry name" value="Class-III_PLP-dep_AT"/>
</dbReference>
<dbReference type="InterPro" id="IPR010164">
    <property type="entry name" value="Orn_aminotrans"/>
</dbReference>
<dbReference type="InterPro" id="IPR015424">
    <property type="entry name" value="PyrdxlP-dep_Trfase"/>
</dbReference>
<dbReference type="InterPro" id="IPR015421">
    <property type="entry name" value="PyrdxlP-dep_Trfase_major"/>
</dbReference>
<dbReference type="InterPro" id="IPR015422">
    <property type="entry name" value="PyrdxlP-dep_Trfase_small"/>
</dbReference>
<dbReference type="NCBIfam" id="TIGR01885">
    <property type="entry name" value="Orn_aminotrans"/>
    <property type="match status" value="1"/>
</dbReference>
<dbReference type="PANTHER" id="PTHR11986">
    <property type="entry name" value="AMINOTRANSFERASE CLASS III"/>
    <property type="match status" value="1"/>
</dbReference>
<dbReference type="PANTHER" id="PTHR11986:SF18">
    <property type="entry name" value="ORNITHINE AMINOTRANSFERASE, MITOCHONDRIAL"/>
    <property type="match status" value="1"/>
</dbReference>
<dbReference type="Pfam" id="PF00202">
    <property type="entry name" value="Aminotran_3"/>
    <property type="match status" value="1"/>
</dbReference>
<dbReference type="PIRSF" id="PIRSF000521">
    <property type="entry name" value="Transaminase_4ab_Lys_Orn"/>
    <property type="match status" value="1"/>
</dbReference>
<dbReference type="SUPFAM" id="SSF53383">
    <property type="entry name" value="PLP-dependent transferases"/>
    <property type="match status" value="1"/>
</dbReference>
<dbReference type="PROSITE" id="PS00600">
    <property type="entry name" value="AA_TRANSFER_CLASS_3"/>
    <property type="match status" value="1"/>
</dbReference>
<comment type="catalytic activity">
    <reaction evidence="2">
        <text>a 2-oxocarboxylate + L-ornithine = L-glutamate 5-semialdehyde + an L-alpha-amino acid</text>
        <dbReference type="Rhea" id="RHEA:13877"/>
        <dbReference type="ChEBI" id="CHEBI:35179"/>
        <dbReference type="ChEBI" id="CHEBI:46911"/>
        <dbReference type="ChEBI" id="CHEBI:58066"/>
        <dbReference type="ChEBI" id="CHEBI:59869"/>
        <dbReference type="EC" id="2.6.1.13"/>
    </reaction>
</comment>
<comment type="cofactor">
    <cofactor evidence="1">
        <name>pyridoxal 5'-phosphate</name>
        <dbReference type="ChEBI" id="CHEBI:597326"/>
    </cofactor>
</comment>
<comment type="pathway">
    <text evidence="2">Amino-acid biosynthesis; L-proline biosynthesis; L-glutamate 5-semialdehyde from L-ornithine: step 1/1.</text>
</comment>
<comment type="subcellular location">
    <subcellularLocation>
        <location evidence="1">Mitochondrion matrix</location>
    </subcellularLocation>
</comment>
<comment type="similarity">
    <text evidence="4">Belongs to the class-III pyridoxal-phosphate-dependent aminotransferase family.</text>
</comment>
<evidence type="ECO:0000250" key="1">
    <source>
        <dbReference type="UniProtKB" id="P04181"/>
    </source>
</evidence>
<evidence type="ECO:0000250" key="2">
    <source>
        <dbReference type="UniProtKB" id="Q6CWC1"/>
    </source>
</evidence>
<evidence type="ECO:0000255" key="3"/>
<evidence type="ECO:0000305" key="4"/>
<evidence type="ECO:0000312" key="5">
    <source>
        <dbReference type="WormBase" id="C16A3.10"/>
    </source>
</evidence>
<keyword id="KW-0032">Aminotransferase</keyword>
<keyword id="KW-0496">Mitochondrion</keyword>
<keyword id="KW-0663">Pyridoxal phosphate</keyword>
<keyword id="KW-1185">Reference proteome</keyword>
<keyword id="KW-0808">Transferase</keyword>
<keyword id="KW-0809">Transit peptide</keyword>
<organism>
    <name type="scientific">Caenorhabditis elegans</name>
    <dbReference type="NCBI Taxonomy" id="6239"/>
    <lineage>
        <taxon>Eukaryota</taxon>
        <taxon>Metazoa</taxon>
        <taxon>Ecdysozoa</taxon>
        <taxon>Nematoda</taxon>
        <taxon>Chromadorea</taxon>
        <taxon>Rhabditida</taxon>
        <taxon>Rhabditina</taxon>
        <taxon>Rhabditomorpha</taxon>
        <taxon>Rhabditoidea</taxon>
        <taxon>Rhabditidae</taxon>
        <taxon>Peloderinae</taxon>
        <taxon>Caenorhabditis</taxon>
    </lineage>
</organism>
<gene>
    <name evidence="5" type="primary">oatr-1</name>
    <name evidence="5" type="ORF">C16A3.10</name>
</gene>
<feature type="transit peptide" description="Mitochondrion" evidence="3">
    <location>
        <begin position="1"/>
        <end status="unknown"/>
    </location>
</feature>
<feature type="chain" id="PRO_0000001266" description="Probable ornithine aminotransferase, mitochondrial">
    <location>
        <begin status="unknown"/>
        <end position="422"/>
    </location>
</feature>
<feature type="modified residue" description="N6-(pyridoxal phosphate)lysine" evidence="1">
    <location>
        <position position="273"/>
    </location>
</feature>